<keyword id="KW-0297">G-protein coupled receptor</keyword>
<keyword id="KW-0325">Glycoprotein</keyword>
<keyword id="KW-0472">Membrane</keyword>
<keyword id="KW-0675">Receptor</keyword>
<keyword id="KW-1185">Reference proteome</keyword>
<keyword id="KW-0716">Sensory transduction</keyword>
<keyword id="KW-0919">Taste</keyword>
<keyword id="KW-0807">Transducer</keyword>
<keyword id="KW-0812">Transmembrane</keyword>
<keyword id="KW-1133">Transmembrane helix</keyword>
<protein>
    <recommendedName>
        <fullName>Taste receptor type 2 member 30</fullName>
        <shortName>T2R30</shortName>
    </recommendedName>
    <alternativeName>
        <fullName>Taste receptor type 2 member 47</fullName>
        <shortName>T2R47</shortName>
    </alternativeName>
</protein>
<organism>
    <name type="scientific">Homo sapiens</name>
    <name type="common">Human</name>
    <dbReference type="NCBI Taxonomy" id="9606"/>
    <lineage>
        <taxon>Eukaryota</taxon>
        <taxon>Metazoa</taxon>
        <taxon>Chordata</taxon>
        <taxon>Craniata</taxon>
        <taxon>Vertebrata</taxon>
        <taxon>Euteleostomi</taxon>
        <taxon>Mammalia</taxon>
        <taxon>Eutheria</taxon>
        <taxon>Euarchontoglires</taxon>
        <taxon>Primates</taxon>
        <taxon>Haplorrhini</taxon>
        <taxon>Catarrhini</taxon>
        <taxon>Hominidae</taxon>
        <taxon>Homo</taxon>
    </lineage>
</organism>
<feature type="chain" id="PRO_0000082323" description="Taste receptor type 2 member 30">
    <location>
        <begin position="1"/>
        <end position="319"/>
    </location>
</feature>
<feature type="topological domain" description="Extracellular" evidence="2">
    <location>
        <position position="1"/>
    </location>
</feature>
<feature type="transmembrane region" description="Helical; Name=1" evidence="2">
    <location>
        <begin position="2"/>
        <end position="22"/>
    </location>
</feature>
<feature type="topological domain" description="Cytoplasmic" evidence="2">
    <location>
        <begin position="23"/>
        <end position="46"/>
    </location>
</feature>
<feature type="transmembrane region" description="Helical; Name=2" evidence="2">
    <location>
        <begin position="47"/>
        <end position="67"/>
    </location>
</feature>
<feature type="topological domain" description="Extracellular" evidence="2">
    <location>
        <begin position="68"/>
        <end position="86"/>
    </location>
</feature>
<feature type="transmembrane region" description="Helical; Name=3" evidence="2">
    <location>
        <begin position="87"/>
        <end position="107"/>
    </location>
</feature>
<feature type="topological domain" description="Cytoplasmic" evidence="2">
    <location>
        <begin position="108"/>
        <end position="126"/>
    </location>
</feature>
<feature type="transmembrane region" description="Helical; Name=4" evidence="2">
    <location>
        <begin position="127"/>
        <end position="147"/>
    </location>
</feature>
<feature type="topological domain" description="Extracellular" evidence="2">
    <location>
        <begin position="148"/>
        <end position="178"/>
    </location>
</feature>
<feature type="transmembrane region" description="Helical; Name=5" evidence="2">
    <location>
        <begin position="179"/>
        <end position="199"/>
    </location>
</feature>
<feature type="topological domain" description="Cytoplasmic" evidence="2">
    <location>
        <begin position="200"/>
        <end position="229"/>
    </location>
</feature>
<feature type="transmembrane region" description="Helical; Name=6" evidence="2">
    <location>
        <begin position="230"/>
        <end position="250"/>
    </location>
</feature>
<feature type="topological domain" description="Extracellular" evidence="2">
    <location>
        <begin position="251"/>
        <end position="259"/>
    </location>
</feature>
<feature type="transmembrane region" description="Helical; Name=7" evidence="2">
    <location>
        <begin position="260"/>
        <end position="280"/>
    </location>
</feature>
<feature type="topological domain" description="Cytoplasmic" evidence="2">
    <location>
        <begin position="281"/>
        <end position="319"/>
    </location>
</feature>
<feature type="glycosylation site" description="N-linked (GlcNAc...) asparagine" evidence="2">
    <location>
        <position position="161"/>
    </location>
</feature>
<feature type="glycosylation site" description="N-linked (GlcNAc...) asparagine" evidence="2">
    <location>
        <position position="176"/>
    </location>
</feature>
<feature type="sequence variant" id="VAR_070809" description="In dbSNP:rs2599404." evidence="3">
    <original>F</original>
    <variation>L</variation>
    <location>
        <position position="252"/>
    </location>
</feature>
<feature type="sequence conflict" description="In Ref. 1; AAU21142." evidence="4" ref="1">
    <original>GALCVF</original>
    <variation>AALCKG</variation>
    <location>
        <begin position="314"/>
        <end position="319"/>
    </location>
</feature>
<evidence type="ECO:0000250" key="1"/>
<evidence type="ECO:0000255" key="2"/>
<evidence type="ECO:0000269" key="3">
    <source>
    </source>
</evidence>
<evidence type="ECO:0000305" key="4"/>
<name>T2R30_HUMAN</name>
<reference key="1">
    <citation type="journal article" date="2005" name="Mol. Biol. Evol.">
        <title>Evolution of bitter taste receptors in humans and apes.</title>
        <authorList>
            <person name="Fischer A."/>
            <person name="Gilad Y."/>
            <person name="Man O."/>
            <person name="Paeaebo S."/>
        </authorList>
    </citation>
    <scope>NUCLEOTIDE SEQUENCE [GENOMIC DNA]</scope>
    <scope>VARIANT LEU-252</scope>
</reference>
<reference key="2">
    <citation type="journal article" date="2006" name="Nature">
        <title>The finished DNA sequence of human chromosome 12.</title>
        <authorList>
            <person name="Scherer S.E."/>
            <person name="Muzny D.M."/>
            <person name="Buhay C.J."/>
            <person name="Chen R."/>
            <person name="Cree A."/>
            <person name="Ding Y."/>
            <person name="Dugan-Rocha S."/>
            <person name="Gill R."/>
            <person name="Gunaratne P."/>
            <person name="Harris R.A."/>
            <person name="Hawes A.C."/>
            <person name="Hernandez J."/>
            <person name="Hodgson A.V."/>
            <person name="Hume J."/>
            <person name="Jackson A."/>
            <person name="Khan Z.M."/>
            <person name="Kovar-Smith C."/>
            <person name="Lewis L.R."/>
            <person name="Lozado R.J."/>
            <person name="Metzker M.L."/>
            <person name="Milosavljevic A."/>
            <person name="Miner G.R."/>
            <person name="Montgomery K.T."/>
            <person name="Morgan M.B."/>
            <person name="Nazareth L.V."/>
            <person name="Scott G."/>
            <person name="Sodergren E."/>
            <person name="Song X.-Z."/>
            <person name="Steffen D."/>
            <person name="Lovering R.C."/>
            <person name="Wheeler D.A."/>
            <person name="Worley K.C."/>
            <person name="Yuan Y."/>
            <person name="Zhang Z."/>
            <person name="Adams C.Q."/>
            <person name="Ansari-Lari M.A."/>
            <person name="Ayele M."/>
            <person name="Brown M.J."/>
            <person name="Chen G."/>
            <person name="Chen Z."/>
            <person name="Clerc-Blankenburg K.P."/>
            <person name="Davis C."/>
            <person name="Delgado O."/>
            <person name="Dinh H.H."/>
            <person name="Draper H."/>
            <person name="Gonzalez-Garay M.L."/>
            <person name="Havlak P."/>
            <person name="Jackson L.R."/>
            <person name="Jacob L.S."/>
            <person name="Kelly S.H."/>
            <person name="Li L."/>
            <person name="Li Z."/>
            <person name="Liu J."/>
            <person name="Liu W."/>
            <person name="Lu J."/>
            <person name="Maheshwari M."/>
            <person name="Nguyen B.-V."/>
            <person name="Okwuonu G.O."/>
            <person name="Pasternak S."/>
            <person name="Perez L.M."/>
            <person name="Plopper F.J.H."/>
            <person name="Santibanez J."/>
            <person name="Shen H."/>
            <person name="Tabor P.E."/>
            <person name="Verduzco D."/>
            <person name="Waldron L."/>
            <person name="Wang Q."/>
            <person name="Williams G.A."/>
            <person name="Zhang J."/>
            <person name="Zhou J."/>
            <person name="Allen C.C."/>
            <person name="Amin A.G."/>
            <person name="Anyalebechi V."/>
            <person name="Bailey M."/>
            <person name="Barbaria J.A."/>
            <person name="Bimage K.E."/>
            <person name="Bryant N.P."/>
            <person name="Burch P.E."/>
            <person name="Burkett C.E."/>
            <person name="Burrell K.L."/>
            <person name="Calderon E."/>
            <person name="Cardenas V."/>
            <person name="Carter K."/>
            <person name="Casias K."/>
            <person name="Cavazos I."/>
            <person name="Cavazos S.R."/>
            <person name="Ceasar H."/>
            <person name="Chacko J."/>
            <person name="Chan S.N."/>
            <person name="Chavez D."/>
            <person name="Christopoulos C."/>
            <person name="Chu J."/>
            <person name="Cockrell R."/>
            <person name="Cox C.D."/>
            <person name="Dang M."/>
            <person name="Dathorne S.R."/>
            <person name="David R."/>
            <person name="Davis C.M."/>
            <person name="Davy-Carroll L."/>
            <person name="Deshazo D.R."/>
            <person name="Donlin J.E."/>
            <person name="D'Souza L."/>
            <person name="Eaves K.A."/>
            <person name="Egan A."/>
            <person name="Emery-Cohen A.J."/>
            <person name="Escotto M."/>
            <person name="Flagg N."/>
            <person name="Forbes L.D."/>
            <person name="Gabisi A.M."/>
            <person name="Garza M."/>
            <person name="Hamilton C."/>
            <person name="Henderson N."/>
            <person name="Hernandez O."/>
            <person name="Hines S."/>
            <person name="Hogues M.E."/>
            <person name="Huang M."/>
            <person name="Idlebird D.G."/>
            <person name="Johnson R."/>
            <person name="Jolivet A."/>
            <person name="Jones S."/>
            <person name="Kagan R."/>
            <person name="King L.M."/>
            <person name="Leal B."/>
            <person name="Lebow H."/>
            <person name="Lee S."/>
            <person name="LeVan J.M."/>
            <person name="Lewis L.C."/>
            <person name="London P."/>
            <person name="Lorensuhewa L.M."/>
            <person name="Loulseged H."/>
            <person name="Lovett D.A."/>
            <person name="Lucier A."/>
            <person name="Lucier R.L."/>
            <person name="Ma J."/>
            <person name="Madu R.C."/>
            <person name="Mapua P."/>
            <person name="Martindale A.D."/>
            <person name="Martinez E."/>
            <person name="Massey E."/>
            <person name="Mawhiney S."/>
            <person name="Meador M.G."/>
            <person name="Mendez S."/>
            <person name="Mercado C."/>
            <person name="Mercado I.C."/>
            <person name="Merritt C.E."/>
            <person name="Miner Z.L."/>
            <person name="Minja E."/>
            <person name="Mitchell T."/>
            <person name="Mohabbat F."/>
            <person name="Mohabbat K."/>
            <person name="Montgomery B."/>
            <person name="Moore N."/>
            <person name="Morris S."/>
            <person name="Munidasa M."/>
            <person name="Ngo R.N."/>
            <person name="Nguyen N.B."/>
            <person name="Nickerson E."/>
            <person name="Nwaokelemeh O.O."/>
            <person name="Nwokenkwo S."/>
            <person name="Obregon M."/>
            <person name="Oguh M."/>
            <person name="Oragunye N."/>
            <person name="Oviedo R.J."/>
            <person name="Parish B.J."/>
            <person name="Parker D.N."/>
            <person name="Parrish J."/>
            <person name="Parks K.L."/>
            <person name="Paul H.A."/>
            <person name="Payton B.A."/>
            <person name="Perez A."/>
            <person name="Perrin W."/>
            <person name="Pickens A."/>
            <person name="Primus E.L."/>
            <person name="Pu L.-L."/>
            <person name="Puazo M."/>
            <person name="Quiles M.M."/>
            <person name="Quiroz J.B."/>
            <person name="Rabata D."/>
            <person name="Reeves K."/>
            <person name="Ruiz S.J."/>
            <person name="Shao H."/>
            <person name="Sisson I."/>
            <person name="Sonaike T."/>
            <person name="Sorelle R.P."/>
            <person name="Sutton A.E."/>
            <person name="Svatek A.F."/>
            <person name="Svetz L.A."/>
            <person name="Tamerisa K.S."/>
            <person name="Taylor T.R."/>
            <person name="Teague B."/>
            <person name="Thomas N."/>
            <person name="Thorn R.D."/>
            <person name="Trejos Z.Y."/>
            <person name="Trevino B.K."/>
            <person name="Ukegbu O.N."/>
            <person name="Urban J.B."/>
            <person name="Vasquez L.I."/>
            <person name="Vera V.A."/>
            <person name="Villasana D.M."/>
            <person name="Wang L."/>
            <person name="Ward-Moore S."/>
            <person name="Warren J.T."/>
            <person name="Wei X."/>
            <person name="White F."/>
            <person name="Williamson A.L."/>
            <person name="Wleczyk R."/>
            <person name="Wooden H.S."/>
            <person name="Wooden S.H."/>
            <person name="Yen J."/>
            <person name="Yoon L."/>
            <person name="Yoon V."/>
            <person name="Zorrilla S.E."/>
            <person name="Nelson D."/>
            <person name="Kucherlapati R."/>
            <person name="Weinstock G."/>
            <person name="Gibbs R.A."/>
        </authorList>
    </citation>
    <scope>NUCLEOTIDE SEQUENCE [LARGE SCALE GENOMIC DNA]</scope>
</reference>
<reference key="3">
    <citation type="journal article" date="2002" name="Nat. Genet.">
        <title>The human TAS2R16 receptor mediates bitter taste in response to beta-glucopyranosides.</title>
        <authorList>
            <person name="Bufe B."/>
            <person name="Hofmann T."/>
            <person name="Krautwurst D."/>
            <person name="Raguse J.-D."/>
            <person name="Meyerhof W."/>
        </authorList>
    </citation>
    <scope>NUCLEOTIDE SEQUENCE [GENOMIC DNA] OF 1-309</scope>
</reference>
<reference key="4">
    <citation type="journal article" date="2002" name="Curr. Opin. Neurobiol.">
        <title>Receptors for bitter and sweet taste.</title>
        <authorList>
            <person name="Montmayeur J.-P."/>
            <person name="Matsunami H."/>
        </authorList>
    </citation>
    <scope>REVIEW</scope>
</reference>
<reference key="5">
    <citation type="journal article" date="2002" name="J. Biol. Chem.">
        <title>Molecular mechanisms of bitter and sweet taste transduction.</title>
        <authorList>
            <person name="Margolskee R.F."/>
        </authorList>
    </citation>
    <scope>REVIEW</scope>
</reference>
<reference key="6">
    <citation type="journal article" date="2003" name="Cell">
        <title>Coding of sweet, bitter, and umami tastes: different receptor cells sharing similar signaling pathways.</title>
        <authorList>
            <person name="Zhang Y."/>
            <person name="Hoon M.A."/>
            <person name="Chandrashekar J."/>
            <person name="Mueller K.L."/>
            <person name="Cook B."/>
            <person name="Wu D."/>
            <person name="Zuker C.S."/>
            <person name="Ryba N.J."/>
        </authorList>
    </citation>
    <scope>REVIEW</scope>
</reference>
<proteinExistence type="evidence at transcript level"/>
<dbReference type="EMBL" id="AY724940">
    <property type="protein sequence ID" value="AAU21142.1"/>
    <property type="molecule type" value="Genomic_DNA"/>
</dbReference>
<dbReference type="EMBL" id="AF494233">
    <property type="protein sequence ID" value="AAM19324.1"/>
    <property type="molecule type" value="Genomic_DNA"/>
</dbReference>
<dbReference type="CCDS" id="CCDS53750.1"/>
<dbReference type="RefSeq" id="NP_001091112.1">
    <property type="nucleotide sequence ID" value="NM_001097643.2"/>
</dbReference>
<dbReference type="SMR" id="P59541"/>
<dbReference type="FunCoup" id="P59541">
    <property type="interactions" value="208"/>
</dbReference>
<dbReference type="STRING" id="9606.ENSP00000444736"/>
<dbReference type="ChEMBL" id="CHEMBL4523254"/>
<dbReference type="DrugCentral" id="P59541"/>
<dbReference type="GuidetoPHARMACOLOGY" id="673"/>
<dbReference type="GlyCosmos" id="P59541">
    <property type="glycosylation" value="2 sites, No reported glycans"/>
</dbReference>
<dbReference type="GlyGen" id="P59541">
    <property type="glycosylation" value="2 sites, 1 N-linked glycan (1 site)"/>
</dbReference>
<dbReference type="iPTMnet" id="P59541"/>
<dbReference type="PhosphoSitePlus" id="P59541"/>
<dbReference type="BioMuta" id="TAS2R30"/>
<dbReference type="DMDM" id="55977810"/>
<dbReference type="MassIVE" id="P59541"/>
<dbReference type="PaxDb" id="9606-ENSP00000444736"/>
<dbReference type="PeptideAtlas" id="P59541"/>
<dbReference type="Antibodypedia" id="57635">
    <property type="antibodies" value="20 antibodies from 10 providers"/>
</dbReference>
<dbReference type="DNASU" id="259293"/>
<dbReference type="Ensembl" id="ENST00000539585.1">
    <property type="protein sequence ID" value="ENSP00000444736.1"/>
    <property type="gene ID" value="ENSG00000256188.3"/>
</dbReference>
<dbReference type="Ensembl" id="ENST00000576640.1">
    <property type="protein sequence ID" value="ENSP00000458170.1"/>
    <property type="gene ID" value="ENSG00000262111.3"/>
</dbReference>
<dbReference type="GeneID" id="259293"/>
<dbReference type="KEGG" id="hsa:259293"/>
<dbReference type="MANE-Select" id="ENST00000539585.1">
    <property type="protein sequence ID" value="ENSP00000444736.1"/>
    <property type="RefSeq nucleotide sequence ID" value="NM_001097643.2"/>
    <property type="RefSeq protein sequence ID" value="NP_001091112.1"/>
</dbReference>
<dbReference type="UCSC" id="uc009zhs.2">
    <property type="organism name" value="human"/>
</dbReference>
<dbReference type="AGR" id="HGNC:19112"/>
<dbReference type="CTD" id="259293"/>
<dbReference type="GeneCards" id="TAS2R30"/>
<dbReference type="HGNC" id="HGNC:19112">
    <property type="gene designation" value="TAS2R30"/>
</dbReference>
<dbReference type="HPA" id="ENSG00000256188">
    <property type="expression patterns" value="Not detected"/>
</dbReference>
<dbReference type="MIM" id="613963">
    <property type="type" value="gene"/>
</dbReference>
<dbReference type="neXtProt" id="NX_P59541"/>
<dbReference type="OpenTargets" id="ENSG00000256188"/>
<dbReference type="VEuPathDB" id="HostDB:ENSG00000256188"/>
<dbReference type="eggNOG" id="ENOG502TE6U">
    <property type="taxonomic scope" value="Eukaryota"/>
</dbReference>
<dbReference type="GeneTree" id="ENSGT01100000263477"/>
<dbReference type="HOGENOM" id="CLU_072337_2_0_1"/>
<dbReference type="InParanoid" id="P59541"/>
<dbReference type="OMA" id="HFSSWLA"/>
<dbReference type="OrthoDB" id="9484230at2759"/>
<dbReference type="PAN-GO" id="P59541">
    <property type="GO annotations" value="3 GO annotations based on evolutionary models"/>
</dbReference>
<dbReference type="PhylomeDB" id="P59541"/>
<dbReference type="PathwayCommons" id="P59541"/>
<dbReference type="Reactome" id="R-HSA-418594">
    <property type="pathway name" value="G alpha (i) signalling events"/>
</dbReference>
<dbReference type="Reactome" id="R-HSA-420499">
    <property type="pathway name" value="Class C/3 (Metabotropic glutamate/pheromone receptors)"/>
</dbReference>
<dbReference type="Reactome" id="R-HSA-9717207">
    <property type="pathway name" value="Sensory perception of sweet, bitter, and umami (glutamate) taste"/>
</dbReference>
<dbReference type="BioGRID-ORCS" id="259293">
    <property type="hits" value="12 hits in 1066 CRISPR screens"/>
</dbReference>
<dbReference type="GenomeRNAi" id="259293"/>
<dbReference type="Pharos" id="P59541">
    <property type="development level" value="Tchem"/>
</dbReference>
<dbReference type="PRO" id="PR:P59541"/>
<dbReference type="Proteomes" id="UP000005640">
    <property type="component" value="Chromosome 12"/>
</dbReference>
<dbReference type="RNAct" id="P59541">
    <property type="molecule type" value="protein"/>
</dbReference>
<dbReference type="Bgee" id="ENSG00000256188">
    <property type="expression patterns" value="Expressed in corpus callosum and 98 other cell types or tissues"/>
</dbReference>
<dbReference type="GO" id="GO:0016020">
    <property type="term" value="C:membrane"/>
    <property type="evidence" value="ECO:0000318"/>
    <property type="project" value="GO_Central"/>
</dbReference>
<dbReference type="GO" id="GO:0005886">
    <property type="term" value="C:plasma membrane"/>
    <property type="evidence" value="ECO:0000304"/>
    <property type="project" value="Reactome"/>
</dbReference>
<dbReference type="GO" id="GO:0033038">
    <property type="term" value="F:bitter taste receptor activity"/>
    <property type="evidence" value="ECO:0000314"/>
    <property type="project" value="UniProtKB"/>
</dbReference>
<dbReference type="GO" id="GO:0004930">
    <property type="term" value="F:G protein-coupled receptor activity"/>
    <property type="evidence" value="ECO:0007669"/>
    <property type="project" value="UniProtKB-KW"/>
</dbReference>
<dbReference type="GO" id="GO:0001580">
    <property type="term" value="P:detection of chemical stimulus involved in sensory perception of bitter taste"/>
    <property type="evidence" value="ECO:0000314"/>
    <property type="project" value="UniProtKB"/>
</dbReference>
<dbReference type="CDD" id="cd15027">
    <property type="entry name" value="7tm_TAS2R43-like"/>
    <property type="match status" value="1"/>
</dbReference>
<dbReference type="FunFam" id="1.20.1070.10:FF:000042">
    <property type="entry name" value="Taste receptor type 2 member 7"/>
    <property type="match status" value="1"/>
</dbReference>
<dbReference type="Gene3D" id="1.20.1070.10">
    <property type="entry name" value="Rhodopsin 7-helix transmembrane proteins"/>
    <property type="match status" value="1"/>
</dbReference>
<dbReference type="InterPro" id="IPR007960">
    <property type="entry name" value="TAS2R"/>
</dbReference>
<dbReference type="PANTHER" id="PTHR11394">
    <property type="entry name" value="TASTE RECEPTOR TYPE 2"/>
    <property type="match status" value="1"/>
</dbReference>
<dbReference type="PANTHER" id="PTHR11394:SF48">
    <property type="entry name" value="TASTE RECEPTOR TYPE 2 MEMBER 30"/>
    <property type="match status" value="1"/>
</dbReference>
<dbReference type="Pfam" id="PF05296">
    <property type="entry name" value="TAS2R"/>
    <property type="match status" value="1"/>
</dbReference>
<dbReference type="SUPFAM" id="SSF81321">
    <property type="entry name" value="Family A G protein-coupled receptor-like"/>
    <property type="match status" value="1"/>
</dbReference>
<sequence length="319" mass="36874">MITFLPIIFSILIVVIFVIGNFANGFIALVNSIEWVKRQKISFVDQILTALAVSRVGLLWVLLLHWYATQLNPAFYSVEVRITAYNVWAVTNHFSSWLATSLSMFYLLRIANFSNLIFLRIKRRVKSVVLVILLGPLLFLVCHLFVINMDETVWTKEYEGNVTWKIKLRSAMYHSNMTLTMLANFVPLTLTLISFLLLICSLCKHLKKMQLHGKGSQDPSTKVHIKALQTVTSFLLLCAIYFLSMIISVCNFGRLEKQPVFMFCQAIIFSYPSTHPFILILGNKKLKQIFLSVLRHVRYWVKDRSLRLHRFTRGALCVF</sequence>
<comment type="function">
    <text evidence="1">Receptor that may play a role in the perception of bitterness and is gustducin-linked. May play a role in sensing the chemical composition of the gastrointestinal content. The activity of this receptor may stimulate alpha gustducin, mediate PLC-beta-2 activation and lead to the gating of TRPM5 (By similarity).</text>
</comment>
<comment type="subcellular location">
    <subcellularLocation>
        <location>Membrane</location>
        <topology>Multi-pass membrane protein</topology>
    </subcellularLocation>
</comment>
<comment type="tissue specificity">
    <text>Expressed in subsets of taste receptor cells of the tongue and exclusively in gustducin-positive cells.</text>
</comment>
<comment type="miscellaneous">
    <text>Most taste cells may be activated by a limited number of bitter compounds; individual taste cells can discriminate among bitter stimuli.</text>
</comment>
<comment type="similarity">
    <text evidence="4">Belongs to the G-protein coupled receptor T2R family.</text>
</comment>
<gene>
    <name type="primary">TAS2R30</name>
    <name type="synonym">TAS2R47</name>
</gene>
<accession>P59541</accession>
<accession>Q645X7</accession>